<sequence length="416" mass="43333">MNKQSWLLNLSLLKTHPAFRAVFLARFISIVSLGLLGVAVPVQIQMMTHSTWQVGLSVTLTGGAMFVGLMVGGVLADRYERKKVILLARGTCGIGFIGLCLNALLPEPSLLAIYLLGLWDGFFASLGVTALLAATPALVGRENLMQAGAITMLTVRLGSVISPMIGGLLLATGGVAWNYGLAAAGTFITLLPLLSLPALPPPPQPREHPLKSLLAGFRFLLASPLVGGIALLGGLLTMASAVRVLYPALADNWQMSAAQIGFLYAAIPLGAAIGALTSGKLAHSARPGLLMLLSTLGSFLAIGLFGLMPMWILGVVCLALFGWLSAVSSLLQYTMLQTQTPEAMLGRINGLWTAQNVTGDAIGAALLGGLGAMMTPVASASASGFGLLIIGVLLLLVLVELRRFRQTPPQMTASDS</sequence>
<name>ENTS_ECOSM</name>
<accession>B1LKI4</accession>
<keyword id="KW-0997">Cell inner membrane</keyword>
<keyword id="KW-1003">Cell membrane</keyword>
<keyword id="KW-0472">Membrane</keyword>
<keyword id="KW-0812">Transmembrane</keyword>
<keyword id="KW-1133">Transmembrane helix</keyword>
<keyword id="KW-0813">Transport</keyword>
<dbReference type="EMBL" id="CP000970">
    <property type="protein sequence ID" value="ACB19519.1"/>
    <property type="molecule type" value="Genomic_DNA"/>
</dbReference>
<dbReference type="RefSeq" id="WP_001041787.1">
    <property type="nucleotide sequence ID" value="NC_010498.1"/>
</dbReference>
<dbReference type="SMR" id="B1LKI4"/>
<dbReference type="KEGG" id="ecm:EcSMS35_0611"/>
<dbReference type="HOGENOM" id="CLU_034180_11_0_6"/>
<dbReference type="Proteomes" id="UP000007011">
    <property type="component" value="Chromosome"/>
</dbReference>
<dbReference type="GO" id="GO:0005886">
    <property type="term" value="C:plasma membrane"/>
    <property type="evidence" value="ECO:0007669"/>
    <property type="project" value="UniProtKB-SubCell"/>
</dbReference>
<dbReference type="GO" id="GO:0042931">
    <property type="term" value="F:enterobactin transmembrane transporter activity"/>
    <property type="evidence" value="ECO:0007669"/>
    <property type="project" value="InterPro"/>
</dbReference>
<dbReference type="CDD" id="cd06173">
    <property type="entry name" value="MFS_MefA_like"/>
    <property type="match status" value="1"/>
</dbReference>
<dbReference type="FunFam" id="1.20.1250.20:FF:000056">
    <property type="entry name" value="Enterobactin exporter EntS"/>
    <property type="match status" value="1"/>
</dbReference>
<dbReference type="Gene3D" id="1.20.1250.20">
    <property type="entry name" value="MFS general substrate transporter like domains"/>
    <property type="match status" value="1"/>
</dbReference>
<dbReference type="HAMAP" id="MF_01436">
    <property type="entry name" value="MFS_EntS"/>
    <property type="match status" value="1"/>
</dbReference>
<dbReference type="InterPro" id="IPR023722">
    <property type="entry name" value="Enterobactin_exp_EntS"/>
</dbReference>
<dbReference type="InterPro" id="IPR020846">
    <property type="entry name" value="MFS_dom"/>
</dbReference>
<dbReference type="InterPro" id="IPR036259">
    <property type="entry name" value="MFS_trans_sf"/>
</dbReference>
<dbReference type="InterPro" id="IPR010290">
    <property type="entry name" value="TM_effector"/>
</dbReference>
<dbReference type="NCBIfam" id="NF007792">
    <property type="entry name" value="PRK10489.1"/>
    <property type="match status" value="1"/>
</dbReference>
<dbReference type="PANTHER" id="PTHR23513:SF9">
    <property type="entry name" value="ENTEROBACTIN EXPORTER ENTS"/>
    <property type="match status" value="1"/>
</dbReference>
<dbReference type="PANTHER" id="PTHR23513">
    <property type="entry name" value="INTEGRAL MEMBRANE EFFLUX PROTEIN-RELATED"/>
    <property type="match status" value="1"/>
</dbReference>
<dbReference type="Pfam" id="PF05977">
    <property type="entry name" value="MFS_3"/>
    <property type="match status" value="1"/>
</dbReference>
<dbReference type="SUPFAM" id="SSF103473">
    <property type="entry name" value="MFS general substrate transporter"/>
    <property type="match status" value="1"/>
</dbReference>
<dbReference type="PROSITE" id="PS50850">
    <property type="entry name" value="MFS"/>
    <property type="match status" value="1"/>
</dbReference>
<comment type="function">
    <text evidence="1">Component of an export pathway for enterobactin.</text>
</comment>
<comment type="subcellular location">
    <subcellularLocation>
        <location evidence="1">Cell inner membrane</location>
        <topology evidence="1">Multi-pass membrane protein</topology>
    </subcellularLocation>
</comment>
<comment type="similarity">
    <text evidence="1">Belongs to the major facilitator superfamily. EntS (TC 2.A.1.38) family.</text>
</comment>
<gene>
    <name evidence="1" type="primary">entS</name>
    <name type="ordered locus">EcSMS35_0611</name>
</gene>
<organism>
    <name type="scientific">Escherichia coli (strain SMS-3-5 / SECEC)</name>
    <dbReference type="NCBI Taxonomy" id="439855"/>
    <lineage>
        <taxon>Bacteria</taxon>
        <taxon>Pseudomonadati</taxon>
        <taxon>Pseudomonadota</taxon>
        <taxon>Gammaproteobacteria</taxon>
        <taxon>Enterobacterales</taxon>
        <taxon>Enterobacteriaceae</taxon>
        <taxon>Escherichia</taxon>
    </lineage>
</organism>
<proteinExistence type="inferred from homology"/>
<feature type="chain" id="PRO_1000145848" description="Enterobactin exporter EntS">
    <location>
        <begin position="1"/>
        <end position="416"/>
    </location>
</feature>
<feature type="topological domain" description="Cytoplasmic" evidence="1">
    <location>
        <begin position="1"/>
        <end position="21"/>
    </location>
</feature>
<feature type="transmembrane region" description="Helical" evidence="1">
    <location>
        <begin position="22"/>
        <end position="42"/>
    </location>
</feature>
<feature type="topological domain" description="Periplasmic" evidence="1">
    <location>
        <begin position="43"/>
        <end position="55"/>
    </location>
</feature>
<feature type="transmembrane region" description="Helical" evidence="1">
    <location>
        <begin position="56"/>
        <end position="76"/>
    </location>
</feature>
<feature type="topological domain" description="Cytoplasmic" evidence="1">
    <location>
        <begin position="77"/>
        <end position="83"/>
    </location>
</feature>
<feature type="transmembrane region" description="Helical" evidence="1">
    <location>
        <begin position="84"/>
        <end position="104"/>
    </location>
</feature>
<feature type="topological domain" description="Periplasmic" evidence="1">
    <location>
        <begin position="105"/>
        <end position="109"/>
    </location>
</feature>
<feature type="transmembrane region" description="Helical" evidence="1">
    <location>
        <begin position="110"/>
        <end position="130"/>
    </location>
</feature>
<feature type="topological domain" description="Cytoplasmic" evidence="1">
    <location>
        <begin position="131"/>
        <end position="156"/>
    </location>
</feature>
<feature type="transmembrane region" description="Helical" evidence="1">
    <location>
        <begin position="157"/>
        <end position="177"/>
    </location>
</feature>
<feature type="topological domain" description="Periplasmic" evidence="1">
    <location>
        <position position="178"/>
    </location>
</feature>
<feature type="transmembrane region" description="Helical" evidence="1">
    <location>
        <begin position="179"/>
        <end position="199"/>
    </location>
</feature>
<feature type="topological domain" description="Cytoplasmic" evidence="1">
    <location>
        <begin position="200"/>
        <end position="218"/>
    </location>
</feature>
<feature type="transmembrane region" description="Helical" evidence="1">
    <location>
        <begin position="219"/>
        <end position="239"/>
    </location>
</feature>
<feature type="topological domain" description="Periplasmic" evidence="1">
    <location>
        <begin position="240"/>
        <end position="256"/>
    </location>
</feature>
<feature type="transmembrane region" description="Helical" evidence="1">
    <location>
        <begin position="257"/>
        <end position="277"/>
    </location>
</feature>
<feature type="topological domain" description="Cytoplasmic" evidence="1">
    <location>
        <begin position="278"/>
        <end position="287"/>
    </location>
</feature>
<feature type="transmembrane region" description="Helical" evidence="1">
    <location>
        <begin position="288"/>
        <end position="307"/>
    </location>
</feature>
<feature type="topological domain" description="Periplasmic" evidence="1">
    <location>
        <begin position="308"/>
        <end position="313"/>
    </location>
</feature>
<feature type="transmembrane region" description="Helical" evidence="1">
    <location>
        <begin position="314"/>
        <end position="336"/>
    </location>
</feature>
<feature type="topological domain" description="Cytoplasmic" evidence="1">
    <location>
        <begin position="337"/>
        <end position="356"/>
    </location>
</feature>
<feature type="transmembrane region" description="Helical" evidence="1">
    <location>
        <begin position="357"/>
        <end position="377"/>
    </location>
</feature>
<feature type="topological domain" description="Periplasmic" evidence="1">
    <location>
        <position position="378"/>
    </location>
</feature>
<feature type="transmembrane region" description="Helical" evidence="1">
    <location>
        <begin position="379"/>
        <end position="399"/>
    </location>
</feature>
<feature type="topological domain" description="Cytoplasmic" evidence="1">
    <location>
        <begin position="400"/>
        <end position="416"/>
    </location>
</feature>
<reference key="1">
    <citation type="journal article" date="2008" name="J. Bacteriol.">
        <title>Insights into the environmental resistance gene pool from the genome sequence of the multidrug-resistant environmental isolate Escherichia coli SMS-3-5.</title>
        <authorList>
            <person name="Fricke W.F."/>
            <person name="Wright M.S."/>
            <person name="Lindell A.H."/>
            <person name="Harkins D.M."/>
            <person name="Baker-Austin C."/>
            <person name="Ravel J."/>
            <person name="Stepanauskas R."/>
        </authorList>
    </citation>
    <scope>NUCLEOTIDE SEQUENCE [LARGE SCALE GENOMIC DNA]</scope>
    <source>
        <strain>SMS-3-5 / SECEC</strain>
    </source>
</reference>
<protein>
    <recommendedName>
        <fullName evidence="1">Enterobactin exporter EntS</fullName>
    </recommendedName>
</protein>
<evidence type="ECO:0000255" key="1">
    <source>
        <dbReference type="HAMAP-Rule" id="MF_01436"/>
    </source>
</evidence>